<organism>
    <name type="scientific">Rhipicephalus sanguineus</name>
    <name type="common">Brown dog tick</name>
    <name type="synonym">Ixodes sanguineus</name>
    <dbReference type="NCBI Taxonomy" id="34632"/>
    <lineage>
        <taxon>Eukaryota</taxon>
        <taxon>Metazoa</taxon>
        <taxon>Ecdysozoa</taxon>
        <taxon>Arthropoda</taxon>
        <taxon>Chelicerata</taxon>
        <taxon>Arachnida</taxon>
        <taxon>Acari</taxon>
        <taxon>Parasitiformes</taxon>
        <taxon>Ixodida</taxon>
        <taxon>Ixodoidea</taxon>
        <taxon>Ixodidae</taxon>
        <taxon>Rhipicephalinae</taxon>
        <taxon>Rhipicephalus</taxon>
        <taxon>Rhipicephalus</taxon>
    </lineage>
</organism>
<dbReference type="EC" id="7.1.1.2"/>
<dbReference type="EMBL" id="AF081829">
    <property type="protein sequence ID" value="AAD05517.1"/>
    <property type="molecule type" value="Genomic_DNA"/>
</dbReference>
<dbReference type="PIR" id="T11153">
    <property type="entry name" value="T11153"/>
</dbReference>
<dbReference type="RefSeq" id="NP_008510.1">
    <property type="nucleotide sequence ID" value="NC_002074.1"/>
</dbReference>
<dbReference type="SMR" id="O99817"/>
<dbReference type="GeneID" id="808361"/>
<dbReference type="KEGG" id="rsan:808361"/>
<dbReference type="CTD" id="4536"/>
<dbReference type="OrthoDB" id="4092844at2759"/>
<dbReference type="GO" id="GO:0005743">
    <property type="term" value="C:mitochondrial inner membrane"/>
    <property type="evidence" value="ECO:0007669"/>
    <property type="project" value="UniProtKB-SubCell"/>
</dbReference>
<dbReference type="GO" id="GO:0008137">
    <property type="term" value="F:NADH dehydrogenase (ubiquinone) activity"/>
    <property type="evidence" value="ECO:0007669"/>
    <property type="project" value="UniProtKB-EC"/>
</dbReference>
<dbReference type="GO" id="GO:0006120">
    <property type="term" value="P:mitochondrial electron transport, NADH to ubiquinone"/>
    <property type="evidence" value="ECO:0007669"/>
    <property type="project" value="InterPro"/>
</dbReference>
<dbReference type="InterPro" id="IPR050175">
    <property type="entry name" value="Complex_I_Subunit_2"/>
</dbReference>
<dbReference type="InterPro" id="IPR003917">
    <property type="entry name" value="NADH_UbQ_OxRdtase_chain2"/>
</dbReference>
<dbReference type="InterPro" id="IPR001750">
    <property type="entry name" value="ND/Mrp_TM"/>
</dbReference>
<dbReference type="PANTHER" id="PTHR46552">
    <property type="entry name" value="NADH-UBIQUINONE OXIDOREDUCTASE CHAIN 2"/>
    <property type="match status" value="1"/>
</dbReference>
<dbReference type="PANTHER" id="PTHR46552:SF1">
    <property type="entry name" value="NADH-UBIQUINONE OXIDOREDUCTASE CHAIN 2"/>
    <property type="match status" value="1"/>
</dbReference>
<dbReference type="Pfam" id="PF00361">
    <property type="entry name" value="Proton_antipo_M"/>
    <property type="match status" value="1"/>
</dbReference>
<dbReference type="PRINTS" id="PR01436">
    <property type="entry name" value="NADHDHGNASE2"/>
</dbReference>
<name>NU2M_RHISA</name>
<gene>
    <name type="primary">ND2</name>
</gene>
<accession>O99817</accession>
<sequence length="313" mass="37099">MMIWIITISILVSLSSNSWFIFWLMMEINMMSFIPIMNDFKMKNYNSMITYFIIQSFSSSLFFISSFQYSLFNMELFFSLINISVLIKLGMIPFHFWLIMISESLTFYSLLILLTIQKIIPLLIIEKFMNSLMIPLFIMSSLLASIMAMKYKLIKQILIFSSISHQGWILCLIAKKMNFWVSYLMLYSIIIYSIIINCKEMNFNKLCDLTKKKISSKMKNTMIMSMMSLAGMPPFIGFFMKIMAIFFLMKMNLIFMMILIISSLINLFFYLRILTPLFFINSKFSIWSFNNMKSNFMIKINMLLLIILINIFF</sequence>
<evidence type="ECO:0000250" key="1"/>
<evidence type="ECO:0000255" key="2"/>
<evidence type="ECO:0000305" key="3"/>
<proteinExistence type="inferred from homology"/>
<feature type="chain" id="PRO_0000117634" description="NADH-ubiquinone oxidoreductase chain 2">
    <location>
        <begin position="1"/>
        <end position="313"/>
    </location>
</feature>
<feature type="transmembrane region" description="Helical" evidence="2">
    <location>
        <begin position="3"/>
        <end position="23"/>
    </location>
</feature>
<feature type="transmembrane region" description="Helical" evidence="2">
    <location>
        <begin position="47"/>
        <end position="67"/>
    </location>
</feature>
<feature type="transmembrane region" description="Helical" evidence="2">
    <location>
        <begin position="81"/>
        <end position="101"/>
    </location>
</feature>
<feature type="transmembrane region" description="Helical" evidence="2">
    <location>
        <begin position="105"/>
        <end position="125"/>
    </location>
</feature>
<feature type="transmembrane region" description="Helical" evidence="2">
    <location>
        <begin position="128"/>
        <end position="148"/>
    </location>
</feature>
<feature type="transmembrane region" description="Helical" evidence="2">
    <location>
        <begin position="153"/>
        <end position="173"/>
    </location>
</feature>
<feature type="transmembrane region" description="Helical" evidence="2">
    <location>
        <begin position="177"/>
        <end position="197"/>
    </location>
</feature>
<feature type="transmembrane region" description="Helical" evidence="2">
    <location>
        <begin position="220"/>
        <end position="240"/>
    </location>
</feature>
<feature type="transmembrane region" description="Helical" evidence="2">
    <location>
        <begin position="253"/>
        <end position="275"/>
    </location>
</feature>
<feature type="transmembrane region" description="Helical" evidence="2">
    <location>
        <begin position="293"/>
        <end position="313"/>
    </location>
</feature>
<protein>
    <recommendedName>
        <fullName>NADH-ubiquinone oxidoreductase chain 2</fullName>
        <ecNumber>7.1.1.2</ecNumber>
    </recommendedName>
    <alternativeName>
        <fullName>NADH dehydrogenase subunit 2</fullName>
    </alternativeName>
</protein>
<comment type="function">
    <text evidence="1">Core subunit of the mitochondrial membrane respiratory chain NADH dehydrogenase (Complex I) that is believed to belong to the minimal assembly required for catalysis. Complex I functions in the transfer of electrons from NADH to the respiratory chain. The immediate electron acceptor for the enzyme is believed to be ubiquinone (By similarity).</text>
</comment>
<comment type="catalytic activity">
    <reaction>
        <text>a ubiquinone + NADH + 5 H(+)(in) = a ubiquinol + NAD(+) + 4 H(+)(out)</text>
        <dbReference type="Rhea" id="RHEA:29091"/>
        <dbReference type="Rhea" id="RHEA-COMP:9565"/>
        <dbReference type="Rhea" id="RHEA-COMP:9566"/>
        <dbReference type="ChEBI" id="CHEBI:15378"/>
        <dbReference type="ChEBI" id="CHEBI:16389"/>
        <dbReference type="ChEBI" id="CHEBI:17976"/>
        <dbReference type="ChEBI" id="CHEBI:57540"/>
        <dbReference type="ChEBI" id="CHEBI:57945"/>
        <dbReference type="EC" id="7.1.1.2"/>
    </reaction>
</comment>
<comment type="subcellular location">
    <subcellularLocation>
        <location>Mitochondrion inner membrane</location>
        <topology>Multi-pass membrane protein</topology>
    </subcellularLocation>
</comment>
<comment type="similarity">
    <text evidence="3">Belongs to the complex I subunit 2 family.</text>
</comment>
<reference key="1">
    <citation type="journal article" date="1998" name="Mol. Biol. Evol.">
        <title>Mitochondrial gene order is not conserved in arthropods: prostriate and metastriate tick mitochondrial genomes.</title>
        <authorList>
            <person name="Black W.C. IV"/>
            <person name="Roehrdanz R.L."/>
        </authorList>
    </citation>
    <scope>NUCLEOTIDE SEQUENCE [GENOMIC DNA]</scope>
</reference>
<keyword id="KW-0249">Electron transport</keyword>
<keyword id="KW-0472">Membrane</keyword>
<keyword id="KW-0496">Mitochondrion</keyword>
<keyword id="KW-0999">Mitochondrion inner membrane</keyword>
<keyword id="KW-0520">NAD</keyword>
<keyword id="KW-0679">Respiratory chain</keyword>
<keyword id="KW-1278">Translocase</keyword>
<keyword id="KW-0812">Transmembrane</keyword>
<keyword id="KW-1133">Transmembrane helix</keyword>
<keyword id="KW-0813">Transport</keyword>
<keyword id="KW-0830">Ubiquinone</keyword>
<geneLocation type="mitochondrion"/>